<organism>
    <name type="scientific">Nitratidesulfovibrio vulgaris (strain ATCC 29579 / DSM 644 / CCUG 34227 / NCIMB 8303 / VKM B-1760 / Hildenborough)</name>
    <name type="common">Desulfovibrio vulgaris</name>
    <dbReference type="NCBI Taxonomy" id="882"/>
    <lineage>
        <taxon>Bacteria</taxon>
        <taxon>Pseudomonadati</taxon>
        <taxon>Thermodesulfobacteriota</taxon>
        <taxon>Desulfovibrionia</taxon>
        <taxon>Desulfovibrionales</taxon>
        <taxon>Desulfovibrionaceae</taxon>
        <taxon>Nitratidesulfovibrio</taxon>
    </lineage>
</organism>
<accession>Q72DQ5</accession>
<protein>
    <recommendedName>
        <fullName evidence="1">Small ribosomal subunit protein uS2</fullName>
    </recommendedName>
    <alternativeName>
        <fullName evidence="3">30S ribosomal protein S2</fullName>
    </alternativeName>
</protein>
<evidence type="ECO:0000255" key="1">
    <source>
        <dbReference type="HAMAP-Rule" id="MF_00291"/>
    </source>
</evidence>
<evidence type="ECO:0000256" key="2">
    <source>
        <dbReference type="SAM" id="MobiDB-lite"/>
    </source>
</evidence>
<evidence type="ECO:0000305" key="3"/>
<gene>
    <name evidence="1" type="primary">rpsB</name>
    <name type="ordered locus">DVU_0874</name>
</gene>
<name>RS2_NITV2</name>
<dbReference type="EMBL" id="AE017285">
    <property type="protein sequence ID" value="AAS95354.1"/>
    <property type="molecule type" value="Genomic_DNA"/>
</dbReference>
<dbReference type="RefSeq" id="WP_010938173.1">
    <property type="nucleotide sequence ID" value="NC_002937.3"/>
</dbReference>
<dbReference type="RefSeq" id="YP_010095.1">
    <property type="nucleotide sequence ID" value="NC_002937.3"/>
</dbReference>
<dbReference type="SMR" id="Q72DQ5"/>
<dbReference type="STRING" id="882.DVU_0874"/>
<dbReference type="PaxDb" id="882-DVU_0874"/>
<dbReference type="EnsemblBacteria" id="AAS95354">
    <property type="protein sequence ID" value="AAS95354"/>
    <property type="gene ID" value="DVU_0874"/>
</dbReference>
<dbReference type="KEGG" id="dvu:DVU_0874"/>
<dbReference type="PATRIC" id="fig|882.5.peg.819"/>
<dbReference type="eggNOG" id="COG0052">
    <property type="taxonomic scope" value="Bacteria"/>
</dbReference>
<dbReference type="HOGENOM" id="CLU_040318_1_2_7"/>
<dbReference type="OrthoDB" id="9808036at2"/>
<dbReference type="PhylomeDB" id="Q72DQ5"/>
<dbReference type="Proteomes" id="UP000002194">
    <property type="component" value="Chromosome"/>
</dbReference>
<dbReference type="GO" id="GO:0022627">
    <property type="term" value="C:cytosolic small ribosomal subunit"/>
    <property type="evidence" value="ECO:0007669"/>
    <property type="project" value="TreeGrafter"/>
</dbReference>
<dbReference type="GO" id="GO:0003735">
    <property type="term" value="F:structural constituent of ribosome"/>
    <property type="evidence" value="ECO:0007669"/>
    <property type="project" value="InterPro"/>
</dbReference>
<dbReference type="GO" id="GO:0006412">
    <property type="term" value="P:translation"/>
    <property type="evidence" value="ECO:0007669"/>
    <property type="project" value="UniProtKB-UniRule"/>
</dbReference>
<dbReference type="CDD" id="cd01425">
    <property type="entry name" value="RPS2"/>
    <property type="match status" value="1"/>
</dbReference>
<dbReference type="FunFam" id="1.10.287.610:FF:000001">
    <property type="entry name" value="30S ribosomal protein S2"/>
    <property type="match status" value="1"/>
</dbReference>
<dbReference type="Gene3D" id="3.40.50.10490">
    <property type="entry name" value="Glucose-6-phosphate isomerase like protein, domain 1"/>
    <property type="match status" value="1"/>
</dbReference>
<dbReference type="Gene3D" id="1.10.287.610">
    <property type="entry name" value="Helix hairpin bin"/>
    <property type="match status" value="1"/>
</dbReference>
<dbReference type="HAMAP" id="MF_00291_B">
    <property type="entry name" value="Ribosomal_uS2_B"/>
    <property type="match status" value="1"/>
</dbReference>
<dbReference type="InterPro" id="IPR001865">
    <property type="entry name" value="Ribosomal_uS2"/>
</dbReference>
<dbReference type="InterPro" id="IPR005706">
    <property type="entry name" value="Ribosomal_uS2_bac/mit/plastid"/>
</dbReference>
<dbReference type="InterPro" id="IPR018130">
    <property type="entry name" value="Ribosomal_uS2_CS"/>
</dbReference>
<dbReference type="InterPro" id="IPR023591">
    <property type="entry name" value="Ribosomal_uS2_flav_dom_sf"/>
</dbReference>
<dbReference type="NCBIfam" id="TIGR01011">
    <property type="entry name" value="rpsB_bact"/>
    <property type="match status" value="1"/>
</dbReference>
<dbReference type="PANTHER" id="PTHR12534">
    <property type="entry name" value="30S RIBOSOMAL PROTEIN S2 PROKARYOTIC AND ORGANELLAR"/>
    <property type="match status" value="1"/>
</dbReference>
<dbReference type="PANTHER" id="PTHR12534:SF0">
    <property type="entry name" value="SMALL RIBOSOMAL SUBUNIT PROTEIN US2M"/>
    <property type="match status" value="1"/>
</dbReference>
<dbReference type="Pfam" id="PF00318">
    <property type="entry name" value="Ribosomal_S2"/>
    <property type="match status" value="1"/>
</dbReference>
<dbReference type="PRINTS" id="PR00395">
    <property type="entry name" value="RIBOSOMALS2"/>
</dbReference>
<dbReference type="SUPFAM" id="SSF52313">
    <property type="entry name" value="Ribosomal protein S2"/>
    <property type="match status" value="1"/>
</dbReference>
<dbReference type="PROSITE" id="PS00962">
    <property type="entry name" value="RIBOSOMAL_S2_1"/>
    <property type="match status" value="1"/>
</dbReference>
<proteinExistence type="inferred from homology"/>
<reference key="1">
    <citation type="journal article" date="2004" name="Nat. Biotechnol.">
        <title>The genome sequence of the anaerobic, sulfate-reducing bacterium Desulfovibrio vulgaris Hildenborough.</title>
        <authorList>
            <person name="Heidelberg J.F."/>
            <person name="Seshadri R."/>
            <person name="Haveman S.A."/>
            <person name="Hemme C.L."/>
            <person name="Paulsen I.T."/>
            <person name="Kolonay J.F."/>
            <person name="Eisen J.A."/>
            <person name="Ward N.L."/>
            <person name="Methe B.A."/>
            <person name="Brinkac L.M."/>
            <person name="Daugherty S.C."/>
            <person name="DeBoy R.T."/>
            <person name="Dodson R.J."/>
            <person name="Durkin A.S."/>
            <person name="Madupu R."/>
            <person name="Nelson W.C."/>
            <person name="Sullivan S.A."/>
            <person name="Fouts D.E."/>
            <person name="Haft D.H."/>
            <person name="Selengut J."/>
            <person name="Peterson J.D."/>
            <person name="Davidsen T.M."/>
            <person name="Zafar N."/>
            <person name="Zhou L."/>
            <person name="Radune D."/>
            <person name="Dimitrov G."/>
            <person name="Hance M."/>
            <person name="Tran K."/>
            <person name="Khouri H.M."/>
            <person name="Gill J."/>
            <person name="Utterback T.R."/>
            <person name="Feldblyum T.V."/>
            <person name="Wall J.D."/>
            <person name="Voordouw G."/>
            <person name="Fraser C.M."/>
        </authorList>
    </citation>
    <scope>NUCLEOTIDE SEQUENCE [LARGE SCALE GENOMIC DNA]</scope>
    <source>
        <strain>ATCC 29579 / DSM 644 / CCUG 34227 / NCIMB 8303 / VKM B-1760 / Hildenborough</strain>
    </source>
</reference>
<comment type="similarity">
    <text evidence="1">Belongs to the universal ribosomal protein uS2 family.</text>
</comment>
<feature type="chain" id="PRO_0000134164" description="Small ribosomal subunit protein uS2">
    <location>
        <begin position="1"/>
        <end position="254"/>
    </location>
</feature>
<feature type="region of interest" description="Disordered" evidence="2">
    <location>
        <begin position="228"/>
        <end position="254"/>
    </location>
</feature>
<feature type="compositionally biased region" description="Basic and acidic residues" evidence="2">
    <location>
        <begin position="228"/>
        <end position="248"/>
    </location>
</feature>
<keyword id="KW-1185">Reference proteome</keyword>
<keyword id="KW-0687">Ribonucleoprotein</keyword>
<keyword id="KW-0689">Ribosomal protein</keyword>
<sequence length="254" mass="28474">MAYVSMKQMLETGVHFGHQTRRWNPKMRPFIFGARNGIHIIDLQQTVKMFRVAHDKVVDTVANGGRVMFIGTKRQAQEAVATEAGRAGQFYVTNRWMGGTLTNFFTIQKSIDRLKKLEAMFADGTVNRYQKKEILRLQREMDKLLATLGGIKDMDKLPQLAFVIDPHREDIAIKECRKLGIPIVAVTDTNCDPDLIDFVIPGNDDAIRAIKLFVAAIADACLEGDALRKERKGQDAEEELKKASEPKAAEAAAE</sequence>